<comment type="similarity">
    <text evidence="1">Belongs to the UPF0434 family.</text>
</comment>
<accession>A1JMK8</accession>
<gene>
    <name type="ordered locus">YE1549</name>
</gene>
<dbReference type="EMBL" id="AM286415">
    <property type="protein sequence ID" value="CAL11627.1"/>
    <property type="molecule type" value="Genomic_DNA"/>
</dbReference>
<dbReference type="RefSeq" id="WP_004700032.1">
    <property type="nucleotide sequence ID" value="NC_008800.1"/>
</dbReference>
<dbReference type="RefSeq" id="YP_001005843.1">
    <property type="nucleotide sequence ID" value="NC_008800.1"/>
</dbReference>
<dbReference type="SMR" id="A1JMK8"/>
<dbReference type="KEGG" id="yen:YE1549"/>
<dbReference type="PATRIC" id="fig|393305.7.peg.1676"/>
<dbReference type="eggNOG" id="COG2835">
    <property type="taxonomic scope" value="Bacteria"/>
</dbReference>
<dbReference type="HOGENOM" id="CLU_155659_3_1_6"/>
<dbReference type="OrthoDB" id="9812205at2"/>
<dbReference type="Proteomes" id="UP000000642">
    <property type="component" value="Chromosome"/>
</dbReference>
<dbReference type="GO" id="GO:0005829">
    <property type="term" value="C:cytosol"/>
    <property type="evidence" value="ECO:0007669"/>
    <property type="project" value="TreeGrafter"/>
</dbReference>
<dbReference type="FunFam" id="2.20.25.10:FF:000002">
    <property type="entry name" value="UPF0434 protein YcaR"/>
    <property type="match status" value="1"/>
</dbReference>
<dbReference type="Gene3D" id="2.20.25.10">
    <property type="match status" value="1"/>
</dbReference>
<dbReference type="HAMAP" id="MF_01187">
    <property type="entry name" value="UPF0434"/>
    <property type="match status" value="1"/>
</dbReference>
<dbReference type="InterPro" id="IPR005651">
    <property type="entry name" value="Trm112-like"/>
</dbReference>
<dbReference type="PANTHER" id="PTHR33505:SF4">
    <property type="entry name" value="PROTEIN PREY, MITOCHONDRIAL"/>
    <property type="match status" value="1"/>
</dbReference>
<dbReference type="PANTHER" id="PTHR33505">
    <property type="entry name" value="ZGC:162634"/>
    <property type="match status" value="1"/>
</dbReference>
<dbReference type="Pfam" id="PF03966">
    <property type="entry name" value="Trm112p"/>
    <property type="match status" value="1"/>
</dbReference>
<dbReference type="SUPFAM" id="SSF158997">
    <property type="entry name" value="Trm112p-like"/>
    <property type="match status" value="1"/>
</dbReference>
<organism>
    <name type="scientific">Yersinia enterocolitica serotype O:8 / biotype 1B (strain NCTC 13174 / 8081)</name>
    <dbReference type="NCBI Taxonomy" id="393305"/>
    <lineage>
        <taxon>Bacteria</taxon>
        <taxon>Pseudomonadati</taxon>
        <taxon>Pseudomonadota</taxon>
        <taxon>Gammaproteobacteria</taxon>
        <taxon>Enterobacterales</taxon>
        <taxon>Yersiniaceae</taxon>
        <taxon>Yersinia</taxon>
    </lineage>
</organism>
<proteinExistence type="inferred from homology"/>
<protein>
    <recommendedName>
        <fullName evidence="1">UPF0434 protein YE1549</fullName>
    </recommendedName>
</protein>
<sequence>MDHRLLEIVACPVCNGKLYFNKENLELVCKADNLAYPVRDGIPVLLENEARPLSIDEKHA</sequence>
<reference key="1">
    <citation type="journal article" date="2006" name="PLoS Genet.">
        <title>The complete genome sequence and comparative genome analysis of the high pathogenicity Yersinia enterocolitica strain 8081.</title>
        <authorList>
            <person name="Thomson N.R."/>
            <person name="Howard S."/>
            <person name="Wren B.W."/>
            <person name="Holden M.T.G."/>
            <person name="Crossman L."/>
            <person name="Challis G.L."/>
            <person name="Churcher C."/>
            <person name="Mungall K."/>
            <person name="Brooks K."/>
            <person name="Chillingworth T."/>
            <person name="Feltwell T."/>
            <person name="Abdellah Z."/>
            <person name="Hauser H."/>
            <person name="Jagels K."/>
            <person name="Maddison M."/>
            <person name="Moule S."/>
            <person name="Sanders M."/>
            <person name="Whitehead S."/>
            <person name="Quail M.A."/>
            <person name="Dougan G."/>
            <person name="Parkhill J."/>
            <person name="Prentice M.B."/>
        </authorList>
    </citation>
    <scope>NUCLEOTIDE SEQUENCE [LARGE SCALE GENOMIC DNA]</scope>
    <source>
        <strain>NCTC 13174 / 8081</strain>
    </source>
</reference>
<name>Y1549_YERE8</name>
<evidence type="ECO:0000255" key="1">
    <source>
        <dbReference type="HAMAP-Rule" id="MF_01187"/>
    </source>
</evidence>
<feature type="chain" id="PRO_0000291185" description="UPF0434 protein YE1549">
    <location>
        <begin position="1"/>
        <end position="60"/>
    </location>
</feature>